<name>TRMFO_SHOC1</name>
<reference key="1">
    <citation type="submission" date="2003-10" db="EMBL/GenBank/DDBJ databases">
        <title>The complete genome sequence of the alkaliphilic Bacillus clausii KSM-K16.</title>
        <authorList>
            <person name="Takaki Y."/>
            <person name="Kageyama Y."/>
            <person name="Shimamura S."/>
            <person name="Suzuki H."/>
            <person name="Nishi S."/>
            <person name="Hatada Y."/>
            <person name="Kawai S."/>
            <person name="Ito S."/>
            <person name="Horikoshi K."/>
        </authorList>
    </citation>
    <scope>NUCLEOTIDE SEQUENCE [LARGE SCALE GENOMIC DNA]</scope>
    <source>
        <strain>KSM-K16</strain>
    </source>
</reference>
<keyword id="KW-0963">Cytoplasm</keyword>
<keyword id="KW-0274">FAD</keyword>
<keyword id="KW-0285">Flavoprotein</keyword>
<keyword id="KW-0489">Methyltransferase</keyword>
<keyword id="KW-0520">NAD</keyword>
<keyword id="KW-0521">NADP</keyword>
<keyword id="KW-1185">Reference proteome</keyword>
<keyword id="KW-0808">Transferase</keyword>
<keyword id="KW-0819">tRNA processing</keyword>
<comment type="function">
    <text evidence="1">Catalyzes the folate-dependent formation of 5-methyl-uridine at position 54 (M-5-U54) in all tRNAs.</text>
</comment>
<comment type="catalytic activity">
    <reaction evidence="1">
        <text>uridine(54) in tRNA + (6R)-5,10-methylene-5,6,7,8-tetrahydrofolate + NADH + H(+) = 5-methyluridine(54) in tRNA + (6S)-5,6,7,8-tetrahydrofolate + NAD(+)</text>
        <dbReference type="Rhea" id="RHEA:16873"/>
        <dbReference type="Rhea" id="RHEA-COMP:10167"/>
        <dbReference type="Rhea" id="RHEA-COMP:10193"/>
        <dbReference type="ChEBI" id="CHEBI:15378"/>
        <dbReference type="ChEBI" id="CHEBI:15636"/>
        <dbReference type="ChEBI" id="CHEBI:57453"/>
        <dbReference type="ChEBI" id="CHEBI:57540"/>
        <dbReference type="ChEBI" id="CHEBI:57945"/>
        <dbReference type="ChEBI" id="CHEBI:65315"/>
        <dbReference type="ChEBI" id="CHEBI:74447"/>
        <dbReference type="EC" id="2.1.1.74"/>
    </reaction>
</comment>
<comment type="catalytic activity">
    <reaction evidence="1">
        <text>uridine(54) in tRNA + (6R)-5,10-methylene-5,6,7,8-tetrahydrofolate + NADPH + H(+) = 5-methyluridine(54) in tRNA + (6S)-5,6,7,8-tetrahydrofolate + NADP(+)</text>
        <dbReference type="Rhea" id="RHEA:62372"/>
        <dbReference type="Rhea" id="RHEA-COMP:10167"/>
        <dbReference type="Rhea" id="RHEA-COMP:10193"/>
        <dbReference type="ChEBI" id="CHEBI:15378"/>
        <dbReference type="ChEBI" id="CHEBI:15636"/>
        <dbReference type="ChEBI" id="CHEBI:57453"/>
        <dbReference type="ChEBI" id="CHEBI:57783"/>
        <dbReference type="ChEBI" id="CHEBI:58349"/>
        <dbReference type="ChEBI" id="CHEBI:65315"/>
        <dbReference type="ChEBI" id="CHEBI:74447"/>
        <dbReference type="EC" id="2.1.1.74"/>
    </reaction>
</comment>
<comment type="cofactor">
    <cofactor evidence="1">
        <name>FAD</name>
        <dbReference type="ChEBI" id="CHEBI:57692"/>
    </cofactor>
</comment>
<comment type="subcellular location">
    <subcellularLocation>
        <location evidence="1">Cytoplasm</location>
    </subcellularLocation>
</comment>
<comment type="similarity">
    <text evidence="1">Belongs to the MnmG family. TrmFO subfamily.</text>
</comment>
<sequence>MTHKQSINVIGAGLAGSEAAWQIAKRGGHVRLYEMRPVKQTPAHHTDKFAELVCSNSLRGNSLANAVGVLKEEMRHLDSVIIKAADEAAVPAGGALAVDRHDFAGKVTEYVKGHPNVTVVQEEVTEIPEGPAIIATGPLTSEALAEQLKAFSGEEYLYFYDAAAPIIDAETIDRDKVYLKSRYDKGEAAYLNCPMTEEEFDRFYQALIEAETVPLREFEKDIFFEGCMPIEVMASRGKKTMLFGPLKPVGLEDPKTGKRPFAVVQLRQDNSSGTLYNMVGFQTHLKWGPQKEVIRMIPGLENADIVRYGVMHRNTFLNSPNLLKPTYQSKKRSDLFFAGQMTGVEGYVESAAAGLVAGINAFKWTQSQELAVFPEETMIGSMAAYITNANAKTFQPMNANFGLVPPLNVRIKAKKERYEALAKRALESIQNFMKEV</sequence>
<dbReference type="EC" id="2.1.1.74" evidence="1"/>
<dbReference type="EMBL" id="AP006627">
    <property type="protein sequence ID" value="BAD64812.1"/>
    <property type="molecule type" value="Genomic_DNA"/>
</dbReference>
<dbReference type="RefSeq" id="WP_011247120.1">
    <property type="nucleotide sequence ID" value="NC_006582.1"/>
</dbReference>
<dbReference type="SMR" id="Q5WFP8"/>
<dbReference type="STRING" id="66692.ABC2277"/>
<dbReference type="KEGG" id="bcl:ABC2277"/>
<dbReference type="eggNOG" id="COG1206">
    <property type="taxonomic scope" value="Bacteria"/>
</dbReference>
<dbReference type="HOGENOM" id="CLU_033057_1_0_9"/>
<dbReference type="OrthoDB" id="9803114at2"/>
<dbReference type="Proteomes" id="UP000001168">
    <property type="component" value="Chromosome"/>
</dbReference>
<dbReference type="GO" id="GO:0005829">
    <property type="term" value="C:cytosol"/>
    <property type="evidence" value="ECO:0007669"/>
    <property type="project" value="TreeGrafter"/>
</dbReference>
<dbReference type="GO" id="GO:0050660">
    <property type="term" value="F:flavin adenine dinucleotide binding"/>
    <property type="evidence" value="ECO:0007669"/>
    <property type="project" value="UniProtKB-UniRule"/>
</dbReference>
<dbReference type="GO" id="GO:0047151">
    <property type="term" value="F:tRNA (uracil(54)-C5)-methyltransferase activity, 5,10-methylenetetrahydrofolate-dependent"/>
    <property type="evidence" value="ECO:0007669"/>
    <property type="project" value="UniProtKB-UniRule"/>
</dbReference>
<dbReference type="GO" id="GO:0030488">
    <property type="term" value="P:tRNA methylation"/>
    <property type="evidence" value="ECO:0007669"/>
    <property type="project" value="TreeGrafter"/>
</dbReference>
<dbReference type="GO" id="GO:0002098">
    <property type="term" value="P:tRNA wobble uridine modification"/>
    <property type="evidence" value="ECO:0007669"/>
    <property type="project" value="TreeGrafter"/>
</dbReference>
<dbReference type="FunFam" id="3.50.50.60:FF:000035">
    <property type="entry name" value="Methylenetetrahydrofolate--tRNA-(uracil-5-)-methyltransferase TrmFO"/>
    <property type="match status" value="1"/>
</dbReference>
<dbReference type="FunFam" id="3.50.50.60:FF:000040">
    <property type="entry name" value="Methylenetetrahydrofolate--tRNA-(uracil-5-)-methyltransferase TrmFO"/>
    <property type="match status" value="1"/>
</dbReference>
<dbReference type="Gene3D" id="3.50.50.60">
    <property type="entry name" value="FAD/NAD(P)-binding domain"/>
    <property type="match status" value="2"/>
</dbReference>
<dbReference type="HAMAP" id="MF_01037">
    <property type="entry name" value="TrmFO"/>
    <property type="match status" value="1"/>
</dbReference>
<dbReference type="InterPro" id="IPR036188">
    <property type="entry name" value="FAD/NAD-bd_sf"/>
</dbReference>
<dbReference type="InterPro" id="IPR002218">
    <property type="entry name" value="MnmG-rel"/>
</dbReference>
<dbReference type="InterPro" id="IPR020595">
    <property type="entry name" value="MnmG-rel_CS"/>
</dbReference>
<dbReference type="InterPro" id="IPR040131">
    <property type="entry name" value="MnmG_N"/>
</dbReference>
<dbReference type="InterPro" id="IPR004417">
    <property type="entry name" value="TrmFO"/>
</dbReference>
<dbReference type="NCBIfam" id="TIGR00137">
    <property type="entry name" value="gid_trmFO"/>
    <property type="match status" value="1"/>
</dbReference>
<dbReference type="NCBIfam" id="NF003739">
    <property type="entry name" value="PRK05335.1"/>
    <property type="match status" value="1"/>
</dbReference>
<dbReference type="PANTHER" id="PTHR11806">
    <property type="entry name" value="GLUCOSE INHIBITED DIVISION PROTEIN A"/>
    <property type="match status" value="1"/>
</dbReference>
<dbReference type="PANTHER" id="PTHR11806:SF2">
    <property type="entry name" value="METHYLENETETRAHYDROFOLATE--TRNA-(URACIL-5-)-METHYLTRANSFERASE TRMFO"/>
    <property type="match status" value="1"/>
</dbReference>
<dbReference type="Pfam" id="PF01134">
    <property type="entry name" value="GIDA"/>
    <property type="match status" value="1"/>
</dbReference>
<dbReference type="SUPFAM" id="SSF51905">
    <property type="entry name" value="FAD/NAD(P)-binding domain"/>
    <property type="match status" value="1"/>
</dbReference>
<dbReference type="PROSITE" id="PS01281">
    <property type="entry name" value="GIDA_2"/>
    <property type="match status" value="1"/>
</dbReference>
<evidence type="ECO:0000255" key="1">
    <source>
        <dbReference type="HAMAP-Rule" id="MF_01037"/>
    </source>
</evidence>
<organism>
    <name type="scientific">Shouchella clausii (strain KSM-K16)</name>
    <name type="common">Alkalihalobacillus clausii</name>
    <dbReference type="NCBI Taxonomy" id="66692"/>
    <lineage>
        <taxon>Bacteria</taxon>
        <taxon>Bacillati</taxon>
        <taxon>Bacillota</taxon>
        <taxon>Bacilli</taxon>
        <taxon>Bacillales</taxon>
        <taxon>Bacillaceae</taxon>
        <taxon>Shouchella</taxon>
    </lineage>
</organism>
<accession>Q5WFP8</accession>
<proteinExistence type="inferred from homology"/>
<gene>
    <name evidence="1" type="primary">trmFO</name>
    <name type="synonym">gid</name>
    <name type="ordered locus">ABC2277</name>
</gene>
<feature type="chain" id="PRO_0000117231" description="Methylenetetrahydrofolate--tRNA-(uracil-5-)-methyltransferase TrmFO">
    <location>
        <begin position="1"/>
        <end position="436"/>
    </location>
</feature>
<feature type="binding site" evidence="1">
    <location>
        <begin position="11"/>
        <end position="16"/>
    </location>
    <ligand>
        <name>FAD</name>
        <dbReference type="ChEBI" id="CHEBI:57692"/>
    </ligand>
</feature>
<protein>
    <recommendedName>
        <fullName evidence="1">Methylenetetrahydrofolate--tRNA-(uracil-5-)-methyltransferase TrmFO</fullName>
        <ecNumber evidence="1">2.1.1.74</ecNumber>
    </recommendedName>
    <alternativeName>
        <fullName evidence="1">Folate-dependent tRNA (uracil-5-)-methyltransferase</fullName>
    </alternativeName>
    <alternativeName>
        <fullName evidence="1">Folate-dependent tRNA(M-5-U54)-methyltransferase</fullName>
    </alternativeName>
</protein>